<feature type="chain" id="PRO_0000080274" description="GDP-Man:Man(3)GlcNAc(2)-PP-Dol alpha-1,2-mannosyltransferase">
    <location>
        <begin position="1"/>
        <end position="505"/>
    </location>
</feature>
<feature type="topological domain" description="Lumenal" evidence="1">
    <location>
        <begin position="1"/>
        <end position="4"/>
    </location>
</feature>
<feature type="transmembrane region" description="Helical" evidence="2">
    <location>
        <begin position="5"/>
        <end position="25"/>
    </location>
</feature>
<feature type="topological domain" description="Cytoplasmic" evidence="1">
    <location>
        <begin position="26"/>
        <end position="130"/>
    </location>
</feature>
<feature type="intramembrane region" description="Helical" evidence="2">
    <location>
        <begin position="131"/>
        <end position="151"/>
    </location>
</feature>
<feature type="topological domain" description="Cytoplasmic" evidence="1">
    <location>
        <begin position="152"/>
        <end position="374"/>
    </location>
</feature>
<feature type="intramembrane region" description="Helical" evidence="2">
    <location>
        <begin position="375"/>
        <end position="395"/>
    </location>
</feature>
<feature type="topological domain" description="Cytoplasmic" evidence="1">
    <location>
        <begin position="396"/>
        <end position="505"/>
    </location>
</feature>
<organism>
    <name type="scientific">Candida glabrata (strain ATCC 2001 / BCRC 20586 / JCM 3761 / NBRC 0622 / NRRL Y-65 / CBS 138)</name>
    <name type="common">Yeast</name>
    <name type="synonym">Nakaseomyces glabratus</name>
    <dbReference type="NCBI Taxonomy" id="284593"/>
    <lineage>
        <taxon>Eukaryota</taxon>
        <taxon>Fungi</taxon>
        <taxon>Dikarya</taxon>
        <taxon>Ascomycota</taxon>
        <taxon>Saccharomycotina</taxon>
        <taxon>Saccharomycetes</taxon>
        <taxon>Saccharomycetales</taxon>
        <taxon>Saccharomycetaceae</taxon>
        <taxon>Nakaseomyces</taxon>
    </lineage>
</organism>
<gene>
    <name type="primary">ALG11</name>
    <name type="ordered locus">CAGL0D01122g</name>
</gene>
<protein>
    <recommendedName>
        <fullName evidence="1">GDP-Man:Man(3)GlcNAc(2)-PP-Dol alpha-1,2-mannosyltransferase</fullName>
        <ecNumber evidence="1">2.4.1.131</ecNumber>
    </recommendedName>
    <alternativeName>
        <fullName>Alpha-1,2-mannosyltransferase ALG11</fullName>
    </alternativeName>
    <alternativeName>
        <fullName>Asparagine-linked glycosylation protein 11</fullName>
    </alternativeName>
    <alternativeName>
        <fullName>Glycolipid 2-alpha-mannosyltransferase</fullName>
    </alternativeName>
</protein>
<name>ALG11_CANGA</name>
<proteinExistence type="inferred from homology"/>
<sequence>MSTMLWVVVAAVLLFVLPVVRVPMLDLTRRNIIRWQRGGIQKYTTRYYGFFHPYCNAGGGGEKVLWKAVQETLLYDPNCSIVIYTGDVDSSPKEIIANVIKRFDYEMDFNRVQFVFLKYRKWVDGSTWKHLTLVGQAMGSMLLTIEALLRFVPDIWLDTMGYPFGYPVVRWLAGLPVMTYTHYPVISSDMIHKIEIENQKQPSKKGTLKLIYWKLFMKWYQYVGKFVDVAITNSTWTGNHIRSIWKRVKIKVMYPPCSTEKLVKNSSPTAYETRQNQAVLIAQFRPEKRHKLVIQAYSDFISRTASKDHFKLVLIGSTRSEEDRAYVETLKSWAFDTLKIPKESLTFKTDCSYDDIKKFLAESTFGINAMWNEHFGIAVVEYAAAGLISLVHASAGPLLDIIVPWDSAKKQQLPYSDSTKDTRTGLFFKDKSDPDYKPTDAQFNNYGSLADIFEEANSLSIAERKQISERAKECASNKFSDNTFNHAWDHALDELEHKTSRLGSN</sequence>
<dbReference type="EC" id="2.4.1.131" evidence="1"/>
<dbReference type="EMBL" id="CR380950">
    <property type="protein sequence ID" value="CAG58374.1"/>
    <property type="molecule type" value="Genomic_DNA"/>
</dbReference>
<dbReference type="RefSeq" id="XP_445463.1">
    <property type="nucleotide sequence ID" value="XM_445463.1"/>
</dbReference>
<dbReference type="FunCoup" id="Q6FWD1">
    <property type="interactions" value="432"/>
</dbReference>
<dbReference type="STRING" id="284593.Q6FWD1"/>
<dbReference type="CAZy" id="GT4">
    <property type="family name" value="Glycosyltransferase Family 4"/>
</dbReference>
<dbReference type="GlyCosmos" id="Q6FWD1">
    <property type="glycosylation" value="2 sites, No reported glycans"/>
</dbReference>
<dbReference type="EnsemblFungi" id="CAGL0D01122g-T">
    <property type="protein sequence ID" value="CAGL0D01122g-T-p1"/>
    <property type="gene ID" value="CAGL0D01122g"/>
</dbReference>
<dbReference type="KEGG" id="cgr:2887168"/>
<dbReference type="CGD" id="CAL0128137">
    <property type="gene designation" value="CAGL0D01122g"/>
</dbReference>
<dbReference type="VEuPathDB" id="FungiDB:CAGL0D01122g"/>
<dbReference type="eggNOG" id="KOG1387">
    <property type="taxonomic scope" value="Eukaryota"/>
</dbReference>
<dbReference type="HOGENOM" id="CLU_017896_1_1_1"/>
<dbReference type="InParanoid" id="Q6FWD1"/>
<dbReference type="OMA" id="WKHFTLI"/>
<dbReference type="UniPathway" id="UPA00378"/>
<dbReference type="Proteomes" id="UP000002428">
    <property type="component" value="Chromosome D"/>
</dbReference>
<dbReference type="GO" id="GO:0005789">
    <property type="term" value="C:endoplasmic reticulum membrane"/>
    <property type="evidence" value="ECO:0007669"/>
    <property type="project" value="UniProtKB-SubCell"/>
</dbReference>
<dbReference type="GO" id="GO:0004377">
    <property type="term" value="F:GDP-Man:Man3GlcNAc2-PP-Dol alpha-1,2-mannosyltransferase activity"/>
    <property type="evidence" value="ECO:0007669"/>
    <property type="project" value="UniProtKB-EC"/>
</dbReference>
<dbReference type="GO" id="GO:0006488">
    <property type="term" value="P:dolichol-linked oligosaccharide biosynthetic process"/>
    <property type="evidence" value="ECO:0007669"/>
    <property type="project" value="EnsemblFungi"/>
</dbReference>
<dbReference type="CDD" id="cd03806">
    <property type="entry name" value="GT4_ALG11-like"/>
    <property type="match status" value="1"/>
</dbReference>
<dbReference type="Gene3D" id="3.40.50.2000">
    <property type="entry name" value="Glycogen Phosphorylase B"/>
    <property type="match status" value="1"/>
</dbReference>
<dbReference type="InterPro" id="IPR038013">
    <property type="entry name" value="ALG11"/>
</dbReference>
<dbReference type="InterPro" id="IPR031814">
    <property type="entry name" value="ALG11_N"/>
</dbReference>
<dbReference type="InterPro" id="IPR001296">
    <property type="entry name" value="Glyco_trans_1"/>
</dbReference>
<dbReference type="PANTHER" id="PTHR45919">
    <property type="entry name" value="GDP-MAN:MAN(3)GLCNAC(2)-PP-DOL ALPHA-1,2-MANNOSYLTRANSFERASE"/>
    <property type="match status" value="1"/>
</dbReference>
<dbReference type="PANTHER" id="PTHR45919:SF1">
    <property type="entry name" value="GDP-MAN:MAN(3)GLCNAC(2)-PP-DOL ALPHA-1,2-MANNOSYLTRANSFERASE"/>
    <property type="match status" value="1"/>
</dbReference>
<dbReference type="Pfam" id="PF15924">
    <property type="entry name" value="ALG11_N"/>
    <property type="match status" value="1"/>
</dbReference>
<dbReference type="Pfam" id="PF00534">
    <property type="entry name" value="Glycos_transf_1"/>
    <property type="match status" value="1"/>
</dbReference>
<dbReference type="SUPFAM" id="SSF53756">
    <property type="entry name" value="UDP-Glycosyltransferase/glycogen phosphorylase"/>
    <property type="match status" value="1"/>
</dbReference>
<comment type="function">
    <text evidence="1">GDP-Man:Man(3)GlcNAc(2)-PP-Dol alpha-1,2-mannosyltransferase that operates in the biosynthetic pathway of dolichol-linked oligosaccharides, the glycan precursors employed in protein asparagine (N)-glycosylation. The assembly of dolichol-linked oligosaccharides begins on the cytosolic side of the endoplasmic reticulum membrane and finishes in its lumen. The sequential addition of sugars to dolichol pyrophosphate produces dolichol-linked oligosaccharides containing fourteen sugars, including two GlcNAcs, nine mannoses and three glucoses. Once assembled, the oligosaccharide is transferred from the lipid to nascent proteins by oligosaccharyltransferases. Catalyzes, on the cytoplasmic face of the endoplasmic reticulum, the addition of the fourth and fifth mannose residues to the dolichol-linked oligosaccharide chain, to produce Man(5)GlcNAc(2)-PP-dolichol core oligosaccharide.</text>
</comment>
<comment type="catalytic activity">
    <reaction evidence="1">
        <text>an alpha-D-Man-(1-&gt;3)-[alpha-D-Man-(1-&gt;6)]-beta-D-Man-(1-&gt;4)-beta-D-GlcNAc-(1-&gt;4)-alpha-D-GlcNAc-diphospho-di-trans,poly-cis-dolichol + 2 GDP-alpha-D-mannose = an alpha-D-Man-(1-&gt;2)-alpha-D-Man-(1-&gt;2)-alpha-D-Man-(1-&gt;3)-[alpha-D-Man-(1-&gt;6)]-beta-D-Man-(1-&gt;4)-beta-D-GlcNAc-(1-&gt;4)-alpha-D-GlcNAc-diphospho-di-trans,poly-cis-dolichol + 2 GDP + 2 H(+)</text>
        <dbReference type="Rhea" id="RHEA:29523"/>
        <dbReference type="Rhea" id="RHEA-COMP:19515"/>
        <dbReference type="Rhea" id="RHEA-COMP:19516"/>
        <dbReference type="ChEBI" id="CHEBI:15378"/>
        <dbReference type="ChEBI" id="CHEBI:57527"/>
        <dbReference type="ChEBI" id="CHEBI:58189"/>
        <dbReference type="ChEBI" id="CHEBI:132511"/>
        <dbReference type="ChEBI" id="CHEBI:132515"/>
        <dbReference type="EC" id="2.4.1.131"/>
    </reaction>
    <physiologicalReaction direction="left-to-right" evidence="1">
        <dbReference type="Rhea" id="RHEA:29524"/>
    </physiologicalReaction>
</comment>
<comment type="pathway">
    <text evidence="1">Protein modification; protein glycosylation.</text>
</comment>
<comment type="subcellular location">
    <subcellularLocation>
        <location evidence="1">Endoplasmic reticulum membrane</location>
        <topology evidence="1">Single-pass membrane protein</topology>
    </subcellularLocation>
</comment>
<comment type="similarity">
    <text evidence="3">Belongs to the glycosyltransferase group 1 family.</text>
</comment>
<accession>Q6FWD1</accession>
<evidence type="ECO:0000250" key="1">
    <source>
        <dbReference type="UniProtKB" id="P53954"/>
    </source>
</evidence>
<evidence type="ECO:0000255" key="2"/>
<evidence type="ECO:0000305" key="3"/>
<reference key="1">
    <citation type="journal article" date="2004" name="Nature">
        <title>Genome evolution in yeasts.</title>
        <authorList>
            <person name="Dujon B."/>
            <person name="Sherman D."/>
            <person name="Fischer G."/>
            <person name="Durrens P."/>
            <person name="Casaregola S."/>
            <person name="Lafontaine I."/>
            <person name="de Montigny J."/>
            <person name="Marck C."/>
            <person name="Neuveglise C."/>
            <person name="Talla E."/>
            <person name="Goffard N."/>
            <person name="Frangeul L."/>
            <person name="Aigle M."/>
            <person name="Anthouard V."/>
            <person name="Babour A."/>
            <person name="Barbe V."/>
            <person name="Barnay S."/>
            <person name="Blanchin S."/>
            <person name="Beckerich J.-M."/>
            <person name="Beyne E."/>
            <person name="Bleykasten C."/>
            <person name="Boisrame A."/>
            <person name="Boyer J."/>
            <person name="Cattolico L."/>
            <person name="Confanioleri F."/>
            <person name="de Daruvar A."/>
            <person name="Despons L."/>
            <person name="Fabre E."/>
            <person name="Fairhead C."/>
            <person name="Ferry-Dumazet H."/>
            <person name="Groppi A."/>
            <person name="Hantraye F."/>
            <person name="Hennequin C."/>
            <person name="Jauniaux N."/>
            <person name="Joyet P."/>
            <person name="Kachouri R."/>
            <person name="Kerrest A."/>
            <person name="Koszul R."/>
            <person name="Lemaire M."/>
            <person name="Lesur I."/>
            <person name="Ma L."/>
            <person name="Muller H."/>
            <person name="Nicaud J.-M."/>
            <person name="Nikolski M."/>
            <person name="Oztas S."/>
            <person name="Ozier-Kalogeropoulos O."/>
            <person name="Pellenz S."/>
            <person name="Potier S."/>
            <person name="Richard G.-F."/>
            <person name="Straub M.-L."/>
            <person name="Suleau A."/>
            <person name="Swennen D."/>
            <person name="Tekaia F."/>
            <person name="Wesolowski-Louvel M."/>
            <person name="Westhof E."/>
            <person name="Wirth B."/>
            <person name="Zeniou-Meyer M."/>
            <person name="Zivanovic Y."/>
            <person name="Bolotin-Fukuhara M."/>
            <person name="Thierry A."/>
            <person name="Bouchier C."/>
            <person name="Caudron B."/>
            <person name="Scarpelli C."/>
            <person name="Gaillardin C."/>
            <person name="Weissenbach J."/>
            <person name="Wincker P."/>
            <person name="Souciet J.-L."/>
        </authorList>
    </citation>
    <scope>NUCLEOTIDE SEQUENCE [LARGE SCALE GENOMIC DNA]</scope>
    <source>
        <strain>ATCC 2001 / BCRC 20586 / JCM 3761 / NBRC 0622 / NRRL Y-65 / CBS 138</strain>
    </source>
</reference>
<keyword id="KW-0256">Endoplasmic reticulum</keyword>
<keyword id="KW-0328">Glycosyltransferase</keyword>
<keyword id="KW-0472">Membrane</keyword>
<keyword id="KW-1185">Reference proteome</keyword>
<keyword id="KW-0808">Transferase</keyword>
<keyword id="KW-0812">Transmembrane</keyword>
<keyword id="KW-1133">Transmembrane helix</keyword>